<name>SELO_PSEA8</name>
<protein>
    <recommendedName>
        <fullName evidence="1">Protein nucleotidyltransferase YdiU</fullName>
        <ecNumber evidence="1">2.7.7.-</ecNumber>
    </recommendedName>
    <alternativeName>
        <fullName evidence="1">Protein adenylyltransferase YdiU</fullName>
        <ecNumber evidence="1">2.7.7.108</ecNumber>
    </alternativeName>
    <alternativeName>
        <fullName evidence="1">Protein uridylyltransferase YdiU</fullName>
        <ecNumber evidence="1">2.7.7.-</ecNumber>
    </alternativeName>
</protein>
<gene>
    <name evidence="1" type="primary">ydiU</name>
    <name evidence="1" type="synonym">selO</name>
    <name type="ordered locus">PLES_54131</name>
</gene>
<organism>
    <name type="scientific">Pseudomonas aeruginosa (strain LESB58)</name>
    <dbReference type="NCBI Taxonomy" id="557722"/>
    <lineage>
        <taxon>Bacteria</taxon>
        <taxon>Pseudomonadati</taxon>
        <taxon>Pseudomonadota</taxon>
        <taxon>Gammaproteobacteria</taxon>
        <taxon>Pseudomonadales</taxon>
        <taxon>Pseudomonadaceae</taxon>
        <taxon>Pseudomonas</taxon>
    </lineage>
</organism>
<keyword id="KW-0067">ATP-binding</keyword>
<keyword id="KW-0460">Magnesium</keyword>
<keyword id="KW-0464">Manganese</keyword>
<keyword id="KW-0479">Metal-binding</keyword>
<keyword id="KW-0547">Nucleotide-binding</keyword>
<keyword id="KW-0548">Nucleotidyltransferase</keyword>
<keyword id="KW-0808">Transferase</keyword>
<proteinExistence type="inferred from homology"/>
<comment type="function">
    <text evidence="1">Nucleotidyltransferase involved in the post-translational modification of proteins. It can catalyze the addition of adenosine monophosphate (AMP) or uridine monophosphate (UMP) to a protein, resulting in modifications known as AMPylation and UMPylation.</text>
</comment>
<comment type="catalytic activity">
    <reaction evidence="1">
        <text>L-seryl-[protein] + ATP = 3-O-(5'-adenylyl)-L-seryl-[protein] + diphosphate</text>
        <dbReference type="Rhea" id="RHEA:58120"/>
        <dbReference type="Rhea" id="RHEA-COMP:9863"/>
        <dbReference type="Rhea" id="RHEA-COMP:15073"/>
        <dbReference type="ChEBI" id="CHEBI:29999"/>
        <dbReference type="ChEBI" id="CHEBI:30616"/>
        <dbReference type="ChEBI" id="CHEBI:33019"/>
        <dbReference type="ChEBI" id="CHEBI:142516"/>
        <dbReference type="EC" id="2.7.7.108"/>
    </reaction>
</comment>
<comment type="catalytic activity">
    <reaction evidence="1">
        <text>L-threonyl-[protein] + ATP = 3-O-(5'-adenylyl)-L-threonyl-[protein] + diphosphate</text>
        <dbReference type="Rhea" id="RHEA:54292"/>
        <dbReference type="Rhea" id="RHEA-COMP:11060"/>
        <dbReference type="Rhea" id="RHEA-COMP:13847"/>
        <dbReference type="ChEBI" id="CHEBI:30013"/>
        <dbReference type="ChEBI" id="CHEBI:30616"/>
        <dbReference type="ChEBI" id="CHEBI:33019"/>
        <dbReference type="ChEBI" id="CHEBI:138113"/>
        <dbReference type="EC" id="2.7.7.108"/>
    </reaction>
</comment>
<comment type="catalytic activity">
    <reaction evidence="1">
        <text>L-tyrosyl-[protein] + ATP = O-(5'-adenylyl)-L-tyrosyl-[protein] + diphosphate</text>
        <dbReference type="Rhea" id="RHEA:54288"/>
        <dbReference type="Rhea" id="RHEA-COMP:10136"/>
        <dbReference type="Rhea" id="RHEA-COMP:13846"/>
        <dbReference type="ChEBI" id="CHEBI:30616"/>
        <dbReference type="ChEBI" id="CHEBI:33019"/>
        <dbReference type="ChEBI" id="CHEBI:46858"/>
        <dbReference type="ChEBI" id="CHEBI:83624"/>
        <dbReference type="EC" id="2.7.7.108"/>
    </reaction>
</comment>
<comment type="catalytic activity">
    <reaction evidence="1">
        <text>L-histidyl-[protein] + UTP = N(tele)-(5'-uridylyl)-L-histidyl-[protein] + diphosphate</text>
        <dbReference type="Rhea" id="RHEA:83891"/>
        <dbReference type="Rhea" id="RHEA-COMP:9745"/>
        <dbReference type="Rhea" id="RHEA-COMP:20239"/>
        <dbReference type="ChEBI" id="CHEBI:29979"/>
        <dbReference type="ChEBI" id="CHEBI:33019"/>
        <dbReference type="ChEBI" id="CHEBI:46398"/>
        <dbReference type="ChEBI" id="CHEBI:233474"/>
    </reaction>
</comment>
<comment type="catalytic activity">
    <reaction evidence="1">
        <text>L-seryl-[protein] + UTP = O-(5'-uridylyl)-L-seryl-[protein] + diphosphate</text>
        <dbReference type="Rhea" id="RHEA:64604"/>
        <dbReference type="Rhea" id="RHEA-COMP:9863"/>
        <dbReference type="Rhea" id="RHEA-COMP:16635"/>
        <dbReference type="ChEBI" id="CHEBI:29999"/>
        <dbReference type="ChEBI" id="CHEBI:33019"/>
        <dbReference type="ChEBI" id="CHEBI:46398"/>
        <dbReference type="ChEBI" id="CHEBI:156051"/>
    </reaction>
</comment>
<comment type="catalytic activity">
    <reaction evidence="1">
        <text>L-tyrosyl-[protein] + UTP = O-(5'-uridylyl)-L-tyrosyl-[protein] + diphosphate</text>
        <dbReference type="Rhea" id="RHEA:83887"/>
        <dbReference type="Rhea" id="RHEA-COMP:10136"/>
        <dbReference type="Rhea" id="RHEA-COMP:20238"/>
        <dbReference type="ChEBI" id="CHEBI:33019"/>
        <dbReference type="ChEBI" id="CHEBI:46398"/>
        <dbReference type="ChEBI" id="CHEBI:46858"/>
        <dbReference type="ChEBI" id="CHEBI:90602"/>
    </reaction>
</comment>
<comment type="cofactor">
    <cofactor evidence="1">
        <name>Mg(2+)</name>
        <dbReference type="ChEBI" id="CHEBI:18420"/>
    </cofactor>
    <cofactor evidence="1">
        <name>Mn(2+)</name>
        <dbReference type="ChEBI" id="CHEBI:29035"/>
    </cofactor>
</comment>
<comment type="similarity">
    <text evidence="1">Belongs to the SELO family.</text>
</comment>
<accession>B7V3B6</accession>
<reference key="1">
    <citation type="journal article" date="2009" name="Genome Res.">
        <title>Newly introduced genomic prophage islands are critical determinants of in vivo competitiveness in the Liverpool epidemic strain of Pseudomonas aeruginosa.</title>
        <authorList>
            <person name="Winstanley C."/>
            <person name="Langille M.G.I."/>
            <person name="Fothergill J.L."/>
            <person name="Kukavica-Ibrulj I."/>
            <person name="Paradis-Bleau C."/>
            <person name="Sanschagrin F."/>
            <person name="Thomson N.R."/>
            <person name="Winsor G.L."/>
            <person name="Quail M.A."/>
            <person name="Lennard N."/>
            <person name="Bignell A."/>
            <person name="Clarke L."/>
            <person name="Seeger K."/>
            <person name="Saunders D."/>
            <person name="Harris D."/>
            <person name="Parkhill J."/>
            <person name="Hancock R.E.W."/>
            <person name="Brinkman F.S.L."/>
            <person name="Levesque R.C."/>
        </authorList>
    </citation>
    <scope>NUCLEOTIDE SEQUENCE [LARGE SCALE GENOMIC DNA]</scope>
    <source>
        <strain>LESB58</strain>
    </source>
</reference>
<feature type="chain" id="PRO_1000132117" description="Protein nucleotidyltransferase YdiU">
    <location>
        <begin position="1"/>
        <end position="486"/>
    </location>
</feature>
<feature type="active site" description="Proton acceptor" evidence="1">
    <location>
        <position position="252"/>
    </location>
</feature>
<feature type="binding site" evidence="1">
    <location>
        <position position="90"/>
    </location>
    <ligand>
        <name>ATP</name>
        <dbReference type="ChEBI" id="CHEBI:30616"/>
    </ligand>
</feature>
<feature type="binding site" evidence="1">
    <location>
        <position position="92"/>
    </location>
    <ligand>
        <name>ATP</name>
        <dbReference type="ChEBI" id="CHEBI:30616"/>
    </ligand>
</feature>
<feature type="binding site" evidence="1">
    <location>
        <position position="93"/>
    </location>
    <ligand>
        <name>ATP</name>
        <dbReference type="ChEBI" id="CHEBI:30616"/>
    </ligand>
</feature>
<feature type="binding site" evidence="1">
    <location>
        <position position="113"/>
    </location>
    <ligand>
        <name>ATP</name>
        <dbReference type="ChEBI" id="CHEBI:30616"/>
    </ligand>
</feature>
<feature type="binding site" evidence="1">
    <location>
        <position position="125"/>
    </location>
    <ligand>
        <name>ATP</name>
        <dbReference type="ChEBI" id="CHEBI:30616"/>
    </ligand>
</feature>
<feature type="binding site" evidence="1">
    <location>
        <position position="126"/>
    </location>
    <ligand>
        <name>ATP</name>
        <dbReference type="ChEBI" id="CHEBI:30616"/>
    </ligand>
</feature>
<feature type="binding site" evidence="1">
    <location>
        <position position="176"/>
    </location>
    <ligand>
        <name>ATP</name>
        <dbReference type="ChEBI" id="CHEBI:30616"/>
    </ligand>
</feature>
<feature type="binding site" evidence="1">
    <location>
        <position position="183"/>
    </location>
    <ligand>
        <name>ATP</name>
        <dbReference type="ChEBI" id="CHEBI:30616"/>
    </ligand>
</feature>
<feature type="binding site" evidence="1">
    <location>
        <position position="253"/>
    </location>
    <ligand>
        <name>Mg(2+)</name>
        <dbReference type="ChEBI" id="CHEBI:18420"/>
    </ligand>
</feature>
<feature type="binding site" evidence="1">
    <location>
        <position position="262"/>
    </location>
    <ligand>
        <name>ATP</name>
        <dbReference type="ChEBI" id="CHEBI:30616"/>
    </ligand>
</feature>
<feature type="binding site" evidence="1">
    <location>
        <position position="262"/>
    </location>
    <ligand>
        <name>Mg(2+)</name>
        <dbReference type="ChEBI" id="CHEBI:18420"/>
    </ligand>
</feature>
<sequence length="486" mass="55035">MKSLDDLDFDNRFARLGGAFSTEVLPDPIAEPRLVVASPAALALLDLPAETSDEALFAELFGGHKLWSEAEPRAMVYSGHQFGSYNPRLGDGRGLLLGEVINQAGEHWDLHLKGAGQTPYSRMGDGRAVLRSSIREFLASEALPALGIPSSRALCVIGSSTPVWREKKESAATLLRLAPSHVRFGHFEYFYYTRQHDQLKQLAAFVLEHHFADCNAAERPYAAMFRQVVERNAELIARWQAYGFCHGVMNTDNMSILGITFDYGPYAFLDDFDANHICNHSDDAGRYSFSNQVPIAHWNLAALAQALTPLVEVDELRASLDLFLPLYQAHYLDLMRRRLGLGVAAENDQALVQELLQRMQGSAVDYSLFFRRLGEETPERALASLRDDFVDREAFDRWAEAYRRRVEEEGGDQESRRRRMHAVNPLYVLRNYLAQQAIEAAEQGDYTEVRLLHQVLSRPFEEQPGMERFTRRPPDWGRHLEISCSS</sequence>
<evidence type="ECO:0000255" key="1">
    <source>
        <dbReference type="HAMAP-Rule" id="MF_00692"/>
    </source>
</evidence>
<dbReference type="EC" id="2.7.7.-" evidence="1"/>
<dbReference type="EC" id="2.7.7.108" evidence="1"/>
<dbReference type="EMBL" id="FM209186">
    <property type="protein sequence ID" value="CAW30167.1"/>
    <property type="molecule type" value="Genomic_DNA"/>
</dbReference>
<dbReference type="RefSeq" id="WP_003103678.1">
    <property type="nucleotide sequence ID" value="NC_011770.1"/>
</dbReference>
<dbReference type="SMR" id="B7V3B6"/>
<dbReference type="KEGG" id="pag:PLES_54131"/>
<dbReference type="HOGENOM" id="CLU_010245_4_0_6"/>
<dbReference type="GO" id="GO:0070733">
    <property type="term" value="F:AMPylase activity"/>
    <property type="evidence" value="ECO:0007669"/>
    <property type="project" value="TreeGrafter"/>
</dbReference>
<dbReference type="GO" id="GO:0005524">
    <property type="term" value="F:ATP binding"/>
    <property type="evidence" value="ECO:0007669"/>
    <property type="project" value="UniProtKB-UniRule"/>
</dbReference>
<dbReference type="GO" id="GO:0000287">
    <property type="term" value="F:magnesium ion binding"/>
    <property type="evidence" value="ECO:0007669"/>
    <property type="project" value="UniProtKB-UniRule"/>
</dbReference>
<dbReference type="HAMAP" id="MF_00692">
    <property type="entry name" value="YdiU_SelO"/>
    <property type="match status" value="1"/>
</dbReference>
<dbReference type="InterPro" id="IPR003846">
    <property type="entry name" value="SelO"/>
</dbReference>
<dbReference type="NCBIfam" id="NF000658">
    <property type="entry name" value="PRK00029.1"/>
    <property type="match status" value="1"/>
</dbReference>
<dbReference type="NCBIfam" id="NF045949">
    <property type="entry name" value="PrtAdtaseSelOPseudom"/>
    <property type="match status" value="1"/>
</dbReference>
<dbReference type="PANTHER" id="PTHR32057">
    <property type="entry name" value="PROTEIN ADENYLYLTRANSFERASE SELO, MITOCHONDRIAL"/>
    <property type="match status" value="1"/>
</dbReference>
<dbReference type="PANTHER" id="PTHR32057:SF14">
    <property type="entry name" value="PROTEIN ADENYLYLTRANSFERASE SELO, MITOCHONDRIAL"/>
    <property type="match status" value="1"/>
</dbReference>
<dbReference type="Pfam" id="PF02696">
    <property type="entry name" value="SelO"/>
    <property type="match status" value="1"/>
</dbReference>